<reference key="1">
    <citation type="journal article" date="2006" name="Proc. Natl. Acad. Sci. U.S.A.">
        <title>Highly conserved syntenic blocks at the vertebrate Hox loci and conserved regulatory elements within and outside Hox gene clusters.</title>
        <authorList>
            <person name="Lee A.P."/>
            <person name="Koh E.G.L."/>
            <person name="Tay A."/>
            <person name="Brenner S."/>
            <person name="Venkatesh B."/>
        </authorList>
    </citation>
    <scope>NUCLEOTIDE SEQUENCE [GENOMIC DNA]</scope>
</reference>
<feature type="chain" id="PRO_0000265978" description="Homeobox protein Hox-B3a">
    <location>
        <begin position="1"/>
        <end position="474"/>
    </location>
</feature>
<feature type="DNA-binding region" description="Homeobox" evidence="2">
    <location>
        <begin position="212"/>
        <end position="271"/>
    </location>
</feature>
<feature type="region of interest" description="Disordered" evidence="3">
    <location>
        <begin position="91"/>
        <end position="164"/>
    </location>
</feature>
<feature type="region of interest" description="Disordered" evidence="3">
    <location>
        <begin position="176"/>
        <end position="215"/>
    </location>
</feature>
<feature type="region of interest" description="Disordered" evidence="3">
    <location>
        <begin position="269"/>
        <end position="325"/>
    </location>
</feature>
<feature type="region of interest" description="Disordered" evidence="3">
    <location>
        <begin position="341"/>
        <end position="362"/>
    </location>
</feature>
<feature type="region of interest" description="Disordered" evidence="3">
    <location>
        <begin position="424"/>
        <end position="474"/>
    </location>
</feature>
<feature type="short sequence motif" description="Antp-type hexapeptide">
    <location>
        <begin position="168"/>
        <end position="173"/>
    </location>
</feature>
<feature type="compositionally biased region" description="Polar residues" evidence="3">
    <location>
        <begin position="116"/>
        <end position="125"/>
    </location>
</feature>
<feature type="compositionally biased region" description="Low complexity" evidence="3">
    <location>
        <begin position="130"/>
        <end position="157"/>
    </location>
</feature>
<feature type="compositionally biased region" description="Low complexity" evidence="3">
    <location>
        <begin position="185"/>
        <end position="204"/>
    </location>
</feature>
<feature type="compositionally biased region" description="Polar residues" evidence="3">
    <location>
        <begin position="205"/>
        <end position="215"/>
    </location>
</feature>
<feature type="compositionally biased region" description="Low complexity" evidence="3">
    <location>
        <begin position="274"/>
        <end position="292"/>
    </location>
</feature>
<feature type="compositionally biased region" description="Pro residues" evidence="3">
    <location>
        <begin position="439"/>
        <end position="448"/>
    </location>
</feature>
<feature type="compositionally biased region" description="Polar residues" evidence="3">
    <location>
        <begin position="449"/>
        <end position="464"/>
    </location>
</feature>
<keyword id="KW-0217">Developmental protein</keyword>
<keyword id="KW-0238">DNA-binding</keyword>
<keyword id="KW-0371">Homeobox</keyword>
<keyword id="KW-0539">Nucleus</keyword>
<keyword id="KW-1185">Reference proteome</keyword>
<keyword id="KW-0804">Transcription</keyword>
<keyword id="KW-0805">Transcription regulation</keyword>
<organism>
    <name type="scientific">Takifugu rubripes</name>
    <name type="common">Japanese pufferfish</name>
    <name type="synonym">Fugu rubripes</name>
    <dbReference type="NCBI Taxonomy" id="31033"/>
    <lineage>
        <taxon>Eukaryota</taxon>
        <taxon>Metazoa</taxon>
        <taxon>Chordata</taxon>
        <taxon>Craniata</taxon>
        <taxon>Vertebrata</taxon>
        <taxon>Euteleostomi</taxon>
        <taxon>Actinopterygii</taxon>
        <taxon>Neopterygii</taxon>
        <taxon>Teleostei</taxon>
        <taxon>Neoteleostei</taxon>
        <taxon>Acanthomorphata</taxon>
        <taxon>Eupercaria</taxon>
        <taxon>Tetraodontiformes</taxon>
        <taxon>Tetradontoidea</taxon>
        <taxon>Tetraodontidae</taxon>
        <taxon>Takifugu</taxon>
    </lineage>
</organism>
<protein>
    <recommendedName>
        <fullName>Homeobox protein Hox-B3a</fullName>
    </recommendedName>
</protein>
<evidence type="ECO:0000250" key="1"/>
<evidence type="ECO:0000255" key="2">
    <source>
        <dbReference type="PROSITE-ProRule" id="PRU00108"/>
    </source>
</evidence>
<evidence type="ECO:0000256" key="3">
    <source>
        <dbReference type="SAM" id="MobiDB-lite"/>
    </source>
</evidence>
<evidence type="ECO:0000305" key="4"/>
<name>HXB3A_TAKRU</name>
<accession>Q1KKX7</accession>
<gene>
    <name type="primary">hoxb3a</name>
</gene>
<dbReference type="EMBL" id="DQ481665">
    <property type="protein sequence ID" value="ABF22417.1"/>
    <property type="molecule type" value="Genomic_DNA"/>
</dbReference>
<dbReference type="SMR" id="Q1KKX7"/>
<dbReference type="FunCoup" id="Q1KKX7">
    <property type="interactions" value="386"/>
</dbReference>
<dbReference type="STRING" id="31033.ENSTRUP00000024391"/>
<dbReference type="eggNOG" id="KOG0489">
    <property type="taxonomic scope" value="Eukaryota"/>
</dbReference>
<dbReference type="InParanoid" id="Q1KKX7"/>
<dbReference type="Proteomes" id="UP000005226">
    <property type="component" value="Unplaced"/>
</dbReference>
<dbReference type="GO" id="GO:0005634">
    <property type="term" value="C:nucleus"/>
    <property type="evidence" value="ECO:0007669"/>
    <property type="project" value="UniProtKB-SubCell"/>
</dbReference>
<dbReference type="GO" id="GO:0000981">
    <property type="term" value="F:DNA-binding transcription factor activity, RNA polymerase II-specific"/>
    <property type="evidence" value="ECO:0007669"/>
    <property type="project" value="InterPro"/>
</dbReference>
<dbReference type="GO" id="GO:0000978">
    <property type="term" value="F:RNA polymerase II cis-regulatory region sequence-specific DNA binding"/>
    <property type="evidence" value="ECO:0007669"/>
    <property type="project" value="TreeGrafter"/>
</dbReference>
<dbReference type="GO" id="GO:0009952">
    <property type="term" value="P:anterior/posterior pattern specification"/>
    <property type="evidence" value="ECO:0007669"/>
    <property type="project" value="TreeGrafter"/>
</dbReference>
<dbReference type="GO" id="GO:0048704">
    <property type="term" value="P:embryonic skeletal system morphogenesis"/>
    <property type="evidence" value="ECO:0007669"/>
    <property type="project" value="TreeGrafter"/>
</dbReference>
<dbReference type="CDD" id="cd00086">
    <property type="entry name" value="homeodomain"/>
    <property type="match status" value="1"/>
</dbReference>
<dbReference type="FunFam" id="1.10.10.60:FF:000094">
    <property type="entry name" value="Homeobox protein Hox-A3"/>
    <property type="match status" value="1"/>
</dbReference>
<dbReference type="Gene3D" id="1.10.10.60">
    <property type="entry name" value="Homeodomain-like"/>
    <property type="match status" value="1"/>
</dbReference>
<dbReference type="InterPro" id="IPR025281">
    <property type="entry name" value="DUF4074"/>
</dbReference>
<dbReference type="InterPro" id="IPR001356">
    <property type="entry name" value="HD"/>
</dbReference>
<dbReference type="InterPro" id="IPR020479">
    <property type="entry name" value="HD_metazoa"/>
</dbReference>
<dbReference type="InterPro" id="IPR001827">
    <property type="entry name" value="Homeobox_Antennapedia_CS"/>
</dbReference>
<dbReference type="InterPro" id="IPR017970">
    <property type="entry name" value="Homeobox_CS"/>
</dbReference>
<dbReference type="InterPro" id="IPR009057">
    <property type="entry name" value="Homeodomain-like_sf"/>
</dbReference>
<dbReference type="PANTHER" id="PTHR45664:SF11">
    <property type="entry name" value="HOMEOBOX PROTEIN HOX-B3"/>
    <property type="match status" value="1"/>
</dbReference>
<dbReference type="PANTHER" id="PTHR45664">
    <property type="entry name" value="PROTEIN ZERKNUELLT 1-RELATED"/>
    <property type="match status" value="1"/>
</dbReference>
<dbReference type="Pfam" id="PF13293">
    <property type="entry name" value="DUF4074"/>
    <property type="match status" value="1"/>
</dbReference>
<dbReference type="Pfam" id="PF00046">
    <property type="entry name" value="Homeodomain"/>
    <property type="match status" value="1"/>
</dbReference>
<dbReference type="PRINTS" id="PR00024">
    <property type="entry name" value="HOMEOBOX"/>
</dbReference>
<dbReference type="SMART" id="SM00389">
    <property type="entry name" value="HOX"/>
    <property type="match status" value="1"/>
</dbReference>
<dbReference type="SUPFAM" id="SSF46689">
    <property type="entry name" value="Homeodomain-like"/>
    <property type="match status" value="1"/>
</dbReference>
<dbReference type="PROSITE" id="PS00032">
    <property type="entry name" value="ANTENNAPEDIA"/>
    <property type="match status" value="1"/>
</dbReference>
<dbReference type="PROSITE" id="PS00027">
    <property type="entry name" value="HOMEOBOX_1"/>
    <property type="match status" value="1"/>
</dbReference>
<dbReference type="PROSITE" id="PS50071">
    <property type="entry name" value="HOMEOBOX_2"/>
    <property type="match status" value="1"/>
</dbReference>
<comment type="function">
    <text evidence="1">Sequence-specific transcription factor which is part of a developmental regulatory system that provides cells with specific positional identities on the anterior-posterior axis.</text>
</comment>
<comment type="subcellular location">
    <subcellularLocation>
        <location evidence="2">Nucleus</location>
    </subcellularLocation>
</comment>
<comment type="similarity">
    <text evidence="4">Belongs to the Antp homeobox family.</text>
</comment>
<sequence>MQKTTYYDNSSTLFGGYSSYQVQGAAAAAANGFGGYDAPVPVSHHQPAFQSATHLDVDSYQRSACSLQSLGSTNSHQQQQQLAKTKELNGSCMRSSLPPEHHPSSQVSPPLPPNPTNGNSGAQQPGGSAGTSSKSGSNKSSTSSSSISSSTSSSSSSLPPNPTLAKQIFPWMKECRQTTKQKTCSPSNNSGNGAESGSSGEKSPTGGSSASSKRARTAYTSAQLVELEKEFHFNRYLCRPRRVEMANLLNLSERQIKIWFQNRRMKYKKDQKSKGLSSSSGGPSPTGSPPLTMQSSASYLNSMHPMGGGGGYDVPSPPSFGKPHQGVSYAMSTAYSNVPVKGCPPQQKYGPPDPDYGDPHPHHSLVQANSAGYGTPTNMQGSPVYVGGGSYLEPMPGSGPSMYGLNHLGPTPTHHQTMDYNGAGPMSATNQHHVGGGGPPGPCDPPTHPTYTELSAHHTSSQGRIQEAPKLTHL</sequence>
<proteinExistence type="inferred from homology"/>